<proteinExistence type="inferred from homology"/>
<comment type="function">
    <text evidence="1">Catalyzes the GTP-dependent ribosomal translocation step during translation elongation. During this step, the ribosome changes from the pre-translocational (PRE) to the post-translocational (POST) state as the newly formed A-site-bound peptidyl-tRNA and P-site-bound deacylated tRNA move to the P and E sites, respectively. Catalyzes the coordinated movement of the two tRNA molecules, the mRNA and conformational changes in the ribosome.</text>
</comment>
<comment type="subcellular location">
    <subcellularLocation>
        <location evidence="1">Cytoplasm</location>
    </subcellularLocation>
</comment>
<comment type="similarity">
    <text evidence="1">Belongs to the TRAFAC class translation factor GTPase superfamily. Classic translation factor GTPase family. EF-G/EF-2 subfamily.</text>
</comment>
<name>EFG2_MYXXD</name>
<accession>Q1D777</accession>
<keyword id="KW-0963">Cytoplasm</keyword>
<keyword id="KW-0251">Elongation factor</keyword>
<keyword id="KW-0342">GTP-binding</keyword>
<keyword id="KW-0547">Nucleotide-binding</keyword>
<keyword id="KW-0648">Protein biosynthesis</keyword>
<keyword id="KW-1185">Reference proteome</keyword>
<organism>
    <name type="scientific">Myxococcus xanthus (strain DK1622)</name>
    <dbReference type="NCBI Taxonomy" id="246197"/>
    <lineage>
        <taxon>Bacteria</taxon>
        <taxon>Pseudomonadati</taxon>
        <taxon>Myxococcota</taxon>
        <taxon>Myxococcia</taxon>
        <taxon>Myxococcales</taxon>
        <taxon>Cystobacterineae</taxon>
        <taxon>Myxococcaceae</taxon>
        <taxon>Myxococcus</taxon>
    </lineage>
</organism>
<gene>
    <name evidence="1" type="primary">fusA2</name>
    <name type="ordered locus">MXAN_3297</name>
</gene>
<dbReference type="EMBL" id="CP000113">
    <property type="protein sequence ID" value="ABF86551.1"/>
    <property type="molecule type" value="Genomic_DNA"/>
</dbReference>
<dbReference type="RefSeq" id="WP_011553341.1">
    <property type="nucleotide sequence ID" value="NC_008095.1"/>
</dbReference>
<dbReference type="SMR" id="Q1D777"/>
<dbReference type="STRING" id="246197.MXAN_3297"/>
<dbReference type="EnsemblBacteria" id="ABF86551">
    <property type="protein sequence ID" value="ABF86551"/>
    <property type="gene ID" value="MXAN_3297"/>
</dbReference>
<dbReference type="GeneID" id="41360650"/>
<dbReference type="KEGG" id="mxa:MXAN_3297"/>
<dbReference type="eggNOG" id="COG0480">
    <property type="taxonomic scope" value="Bacteria"/>
</dbReference>
<dbReference type="HOGENOM" id="CLU_002794_4_1_7"/>
<dbReference type="OrthoDB" id="9760518at2"/>
<dbReference type="Proteomes" id="UP000002402">
    <property type="component" value="Chromosome"/>
</dbReference>
<dbReference type="GO" id="GO:0005737">
    <property type="term" value="C:cytoplasm"/>
    <property type="evidence" value="ECO:0007669"/>
    <property type="project" value="UniProtKB-SubCell"/>
</dbReference>
<dbReference type="GO" id="GO:0005525">
    <property type="term" value="F:GTP binding"/>
    <property type="evidence" value="ECO:0007669"/>
    <property type="project" value="UniProtKB-UniRule"/>
</dbReference>
<dbReference type="GO" id="GO:0003924">
    <property type="term" value="F:GTPase activity"/>
    <property type="evidence" value="ECO:0007669"/>
    <property type="project" value="InterPro"/>
</dbReference>
<dbReference type="GO" id="GO:0003746">
    <property type="term" value="F:translation elongation factor activity"/>
    <property type="evidence" value="ECO:0007669"/>
    <property type="project" value="UniProtKB-UniRule"/>
</dbReference>
<dbReference type="GO" id="GO:0032790">
    <property type="term" value="P:ribosome disassembly"/>
    <property type="evidence" value="ECO:0007669"/>
    <property type="project" value="TreeGrafter"/>
</dbReference>
<dbReference type="CDD" id="cd01886">
    <property type="entry name" value="EF-G"/>
    <property type="match status" value="1"/>
</dbReference>
<dbReference type="CDD" id="cd16262">
    <property type="entry name" value="EFG_III"/>
    <property type="match status" value="1"/>
</dbReference>
<dbReference type="CDD" id="cd01434">
    <property type="entry name" value="EFG_mtEFG1_IV"/>
    <property type="match status" value="1"/>
</dbReference>
<dbReference type="CDD" id="cd03713">
    <property type="entry name" value="EFG_mtEFG_C"/>
    <property type="match status" value="1"/>
</dbReference>
<dbReference type="CDD" id="cd04088">
    <property type="entry name" value="EFG_mtEFG_II"/>
    <property type="match status" value="1"/>
</dbReference>
<dbReference type="FunFam" id="2.40.30.10:FF:000006">
    <property type="entry name" value="Elongation factor G"/>
    <property type="match status" value="1"/>
</dbReference>
<dbReference type="FunFam" id="3.30.230.10:FF:000003">
    <property type="entry name" value="Elongation factor G"/>
    <property type="match status" value="1"/>
</dbReference>
<dbReference type="FunFam" id="3.30.70.240:FF:000001">
    <property type="entry name" value="Elongation factor G"/>
    <property type="match status" value="1"/>
</dbReference>
<dbReference type="FunFam" id="3.30.70.870:FF:000001">
    <property type="entry name" value="Elongation factor G"/>
    <property type="match status" value="1"/>
</dbReference>
<dbReference type="FunFam" id="3.40.50.300:FF:000029">
    <property type="entry name" value="Elongation factor G"/>
    <property type="match status" value="1"/>
</dbReference>
<dbReference type="Gene3D" id="3.30.230.10">
    <property type="match status" value="1"/>
</dbReference>
<dbReference type="Gene3D" id="3.30.70.240">
    <property type="match status" value="1"/>
</dbReference>
<dbReference type="Gene3D" id="3.30.70.870">
    <property type="entry name" value="Elongation Factor G (Translational Gtpase), domain 3"/>
    <property type="match status" value="1"/>
</dbReference>
<dbReference type="Gene3D" id="3.40.50.300">
    <property type="entry name" value="P-loop containing nucleotide triphosphate hydrolases"/>
    <property type="match status" value="1"/>
</dbReference>
<dbReference type="Gene3D" id="2.40.30.10">
    <property type="entry name" value="Translation factors"/>
    <property type="match status" value="1"/>
</dbReference>
<dbReference type="HAMAP" id="MF_00054_B">
    <property type="entry name" value="EF_G_EF_2_B"/>
    <property type="match status" value="1"/>
</dbReference>
<dbReference type="InterPro" id="IPR053905">
    <property type="entry name" value="EF-G-like_DII"/>
</dbReference>
<dbReference type="InterPro" id="IPR041095">
    <property type="entry name" value="EFG_II"/>
</dbReference>
<dbReference type="InterPro" id="IPR009022">
    <property type="entry name" value="EFG_III"/>
</dbReference>
<dbReference type="InterPro" id="IPR035647">
    <property type="entry name" value="EFG_III/V"/>
</dbReference>
<dbReference type="InterPro" id="IPR047872">
    <property type="entry name" value="EFG_IV"/>
</dbReference>
<dbReference type="InterPro" id="IPR035649">
    <property type="entry name" value="EFG_V"/>
</dbReference>
<dbReference type="InterPro" id="IPR000640">
    <property type="entry name" value="EFG_V-like"/>
</dbReference>
<dbReference type="InterPro" id="IPR031157">
    <property type="entry name" value="G_TR_CS"/>
</dbReference>
<dbReference type="InterPro" id="IPR027417">
    <property type="entry name" value="P-loop_NTPase"/>
</dbReference>
<dbReference type="InterPro" id="IPR020568">
    <property type="entry name" value="Ribosomal_Su5_D2-typ_SF"/>
</dbReference>
<dbReference type="InterPro" id="IPR014721">
    <property type="entry name" value="Ribsml_uS5_D2-typ_fold_subgr"/>
</dbReference>
<dbReference type="InterPro" id="IPR005225">
    <property type="entry name" value="Small_GTP-bd"/>
</dbReference>
<dbReference type="InterPro" id="IPR000795">
    <property type="entry name" value="T_Tr_GTP-bd_dom"/>
</dbReference>
<dbReference type="InterPro" id="IPR009000">
    <property type="entry name" value="Transl_B-barrel_sf"/>
</dbReference>
<dbReference type="InterPro" id="IPR004540">
    <property type="entry name" value="Transl_elong_EFG/EF2"/>
</dbReference>
<dbReference type="InterPro" id="IPR005517">
    <property type="entry name" value="Transl_elong_EFG/EF2_IV"/>
</dbReference>
<dbReference type="NCBIfam" id="TIGR00484">
    <property type="entry name" value="EF-G"/>
    <property type="match status" value="1"/>
</dbReference>
<dbReference type="NCBIfam" id="NF009381">
    <property type="entry name" value="PRK12740.1-5"/>
    <property type="match status" value="1"/>
</dbReference>
<dbReference type="NCBIfam" id="TIGR00231">
    <property type="entry name" value="small_GTP"/>
    <property type="match status" value="1"/>
</dbReference>
<dbReference type="PANTHER" id="PTHR43261:SF1">
    <property type="entry name" value="RIBOSOME-RELEASING FACTOR 2, MITOCHONDRIAL"/>
    <property type="match status" value="1"/>
</dbReference>
<dbReference type="PANTHER" id="PTHR43261">
    <property type="entry name" value="TRANSLATION ELONGATION FACTOR G-RELATED"/>
    <property type="match status" value="1"/>
</dbReference>
<dbReference type="Pfam" id="PF22042">
    <property type="entry name" value="EF-G_D2"/>
    <property type="match status" value="1"/>
</dbReference>
<dbReference type="Pfam" id="PF00679">
    <property type="entry name" value="EFG_C"/>
    <property type="match status" value="1"/>
</dbReference>
<dbReference type="Pfam" id="PF14492">
    <property type="entry name" value="EFG_III"/>
    <property type="match status" value="1"/>
</dbReference>
<dbReference type="Pfam" id="PF03764">
    <property type="entry name" value="EFG_IV"/>
    <property type="match status" value="1"/>
</dbReference>
<dbReference type="Pfam" id="PF00009">
    <property type="entry name" value="GTP_EFTU"/>
    <property type="match status" value="1"/>
</dbReference>
<dbReference type="PRINTS" id="PR00315">
    <property type="entry name" value="ELONGATNFCT"/>
</dbReference>
<dbReference type="SMART" id="SM00838">
    <property type="entry name" value="EFG_C"/>
    <property type="match status" value="1"/>
</dbReference>
<dbReference type="SMART" id="SM00889">
    <property type="entry name" value="EFG_IV"/>
    <property type="match status" value="1"/>
</dbReference>
<dbReference type="SUPFAM" id="SSF54980">
    <property type="entry name" value="EF-G C-terminal domain-like"/>
    <property type="match status" value="2"/>
</dbReference>
<dbReference type="SUPFAM" id="SSF52540">
    <property type="entry name" value="P-loop containing nucleoside triphosphate hydrolases"/>
    <property type="match status" value="1"/>
</dbReference>
<dbReference type="SUPFAM" id="SSF54211">
    <property type="entry name" value="Ribosomal protein S5 domain 2-like"/>
    <property type="match status" value="1"/>
</dbReference>
<dbReference type="SUPFAM" id="SSF50447">
    <property type="entry name" value="Translation proteins"/>
    <property type="match status" value="1"/>
</dbReference>
<dbReference type="PROSITE" id="PS00301">
    <property type="entry name" value="G_TR_1"/>
    <property type="match status" value="1"/>
</dbReference>
<dbReference type="PROSITE" id="PS51722">
    <property type="entry name" value="G_TR_2"/>
    <property type="match status" value="1"/>
</dbReference>
<evidence type="ECO:0000255" key="1">
    <source>
        <dbReference type="HAMAP-Rule" id="MF_00054"/>
    </source>
</evidence>
<feature type="chain" id="PRO_0000263474" description="Elongation factor G 2">
    <location>
        <begin position="1"/>
        <end position="691"/>
    </location>
</feature>
<feature type="domain" description="tr-type G">
    <location>
        <begin position="8"/>
        <end position="287"/>
    </location>
</feature>
<feature type="binding site" evidence="1">
    <location>
        <begin position="17"/>
        <end position="24"/>
    </location>
    <ligand>
        <name>GTP</name>
        <dbReference type="ChEBI" id="CHEBI:37565"/>
    </ligand>
</feature>
<feature type="binding site" evidence="1">
    <location>
        <begin position="85"/>
        <end position="89"/>
    </location>
    <ligand>
        <name>GTP</name>
        <dbReference type="ChEBI" id="CHEBI:37565"/>
    </ligand>
</feature>
<feature type="binding site" evidence="1">
    <location>
        <begin position="139"/>
        <end position="142"/>
    </location>
    <ligand>
        <name>GTP</name>
        <dbReference type="ChEBI" id="CHEBI:37565"/>
    </ligand>
</feature>
<protein>
    <recommendedName>
        <fullName evidence="1">Elongation factor G 2</fullName>
        <shortName evidence="1">EF-G 2</shortName>
    </recommendedName>
</protein>
<reference key="1">
    <citation type="journal article" date="2006" name="Proc. Natl. Acad. Sci. U.S.A.">
        <title>Evolution of sensory complexity recorded in a myxobacterial genome.</title>
        <authorList>
            <person name="Goldman B.S."/>
            <person name="Nierman W.C."/>
            <person name="Kaiser D."/>
            <person name="Slater S.C."/>
            <person name="Durkin A.S."/>
            <person name="Eisen J.A."/>
            <person name="Ronning C.M."/>
            <person name="Barbazuk W.B."/>
            <person name="Blanchard M."/>
            <person name="Field C."/>
            <person name="Halling C."/>
            <person name="Hinkle G."/>
            <person name="Iartchuk O."/>
            <person name="Kim H.S."/>
            <person name="Mackenzie C."/>
            <person name="Madupu R."/>
            <person name="Miller N."/>
            <person name="Shvartsbeyn A."/>
            <person name="Sullivan S.A."/>
            <person name="Vaudin M."/>
            <person name="Wiegand R."/>
            <person name="Kaplan H.B."/>
        </authorList>
    </citation>
    <scope>NUCLEOTIDE SEQUENCE [LARGE SCALE GENOMIC DNA]</scope>
    <source>
        <strain>DK1622</strain>
    </source>
</reference>
<sequence>MAREYPLDRYRNIGIMAHIDAGKTTTTERILFYTGAIHRMGEVHEGNTTTDWMVQERERGITITSAAISAFWARHDQRYRVNIIDTPGHVDFTIEVERSLRVLDGAITVFDAVNGVEPQSETVWRQADKYKVPRICFINKMDRVGADFEMSVGTIREKLGARAVRMQLPLGAEDKHRGVIDLLKMKALVFQDSEQGSHYEESDIPEEFKEAADAARAELLEAAAEQDDALTEKFLEGVELTEDEVRGAIRKGCLGLKLFPVFCGSAFRHKGVQPLLDAVVDYLPSPLEVPPIHGKTPNGEDAVRETRDDAPFSALAFKIMNDPAFQSQTLTFLRVYSGKLEAGTAVWNSVKGKRERISRLVQMRADKKDEITECYAGDICAVVGLKLAGTGDTLCDDKQPIILERMDFPEPVIDIAIEPKSTADQDKILQSLQRLAMEDPSFRVRTNEETGQTLIAGMGELHLEIIVDRLLREFKVDANIGKPQVAYRETVTTQVEMEGKYIRQTGGRGQYGHIWLRVAPNEPGKGFSFENKVTGGVVSKEFVDAVKAGCAEAMQNGPVAGYPMVDVKVEAFDGSMHDVDSSEIAFKIAGSLAFKDAVRMATPVLLEPIMNCEIVTPDDFMGDVIGDLNGRRGKVQGMTPRPGRVQAIQAQVPLAAMFGYSTDLRSRSQGRATYTMQFSHYAPAPKTALNR</sequence>